<evidence type="ECO:0000250" key="1"/>
<evidence type="ECO:0000255" key="2"/>
<evidence type="ECO:0000255" key="3">
    <source>
        <dbReference type="PROSITE-ProRule" id="PRU01266"/>
    </source>
</evidence>
<evidence type="ECO:0000305" key="4"/>
<reference key="1">
    <citation type="submission" date="2006-03" db="EMBL/GenBank/DDBJ databases">
        <title>Complete sequence of Rhodopseudomonas palustris BisB5.</title>
        <authorList>
            <consortium name="US DOE Joint Genome Institute"/>
            <person name="Copeland A."/>
            <person name="Lucas S."/>
            <person name="Lapidus A."/>
            <person name="Barry K."/>
            <person name="Detter J.C."/>
            <person name="Glavina del Rio T."/>
            <person name="Hammon N."/>
            <person name="Israni S."/>
            <person name="Dalin E."/>
            <person name="Tice H."/>
            <person name="Pitluck S."/>
            <person name="Chain P."/>
            <person name="Malfatti S."/>
            <person name="Shin M."/>
            <person name="Vergez L."/>
            <person name="Schmutz J."/>
            <person name="Larimer F."/>
            <person name="Land M."/>
            <person name="Hauser L."/>
            <person name="Pelletier D.A."/>
            <person name="Kyrpides N."/>
            <person name="Lykidis A."/>
            <person name="Oda Y."/>
            <person name="Harwood C.S."/>
            <person name="Richardson P."/>
        </authorList>
    </citation>
    <scope>NUCLEOTIDE SEQUENCE [LARGE SCALE GENOMIC DNA]</scope>
    <source>
        <strain>BisB5</strain>
    </source>
</reference>
<keyword id="KW-0004">4Fe-4S</keyword>
<keyword id="KW-0963">Cytoplasm</keyword>
<keyword id="KW-1015">Disulfide bond</keyword>
<keyword id="KW-0408">Iron</keyword>
<keyword id="KW-0411">Iron-sulfur</keyword>
<keyword id="KW-0479">Metal-binding</keyword>
<keyword id="KW-0489">Methyltransferase</keyword>
<keyword id="KW-0949">S-adenosyl-L-methionine</keyword>
<keyword id="KW-0808">Transferase</keyword>
<comment type="cofactor">
    <cofactor evidence="1">
        <name>[4Fe-4S] cluster</name>
        <dbReference type="ChEBI" id="CHEBI:49883"/>
    </cofactor>
    <text evidence="1">Binds 1 [4Fe-4S] cluster. The cluster is coordinated with 3 cysteines and an exchangeable S-adenosyl-L-methionine.</text>
</comment>
<comment type="subcellular location">
    <subcellularLocation>
        <location evidence="4">Cytoplasm</location>
    </subcellularLocation>
</comment>
<comment type="similarity">
    <text evidence="4">Belongs to the radical SAM superfamily. RlmN family.</text>
</comment>
<protein>
    <recommendedName>
        <fullName>Probable RNA methyltransferase RPD_2859</fullName>
        <ecNumber>2.1.1.-</ecNumber>
    </recommendedName>
</protein>
<feature type="chain" id="PRO_0000350372" description="Probable RNA methyltransferase RPD_2859">
    <location>
        <begin position="1"/>
        <end position="359"/>
    </location>
</feature>
<feature type="domain" description="Radical SAM core" evidence="3">
    <location>
        <begin position="105"/>
        <end position="330"/>
    </location>
</feature>
<feature type="active site" description="Proton acceptor" evidence="2">
    <location>
        <position position="99"/>
    </location>
</feature>
<feature type="active site" description="S-methylcysteine intermediate" evidence="1">
    <location>
        <position position="336"/>
    </location>
</feature>
<feature type="binding site" evidence="1">
    <location>
        <position position="119"/>
    </location>
    <ligand>
        <name>[4Fe-4S] cluster</name>
        <dbReference type="ChEBI" id="CHEBI:49883"/>
        <note>4Fe-4S-S-AdoMet</note>
    </ligand>
</feature>
<feature type="binding site" evidence="1">
    <location>
        <position position="123"/>
    </location>
    <ligand>
        <name>[4Fe-4S] cluster</name>
        <dbReference type="ChEBI" id="CHEBI:49883"/>
        <note>4Fe-4S-S-AdoMet</note>
    </ligand>
</feature>
<feature type="binding site" evidence="1">
    <location>
        <position position="126"/>
    </location>
    <ligand>
        <name>[4Fe-4S] cluster</name>
        <dbReference type="ChEBI" id="CHEBI:49883"/>
        <note>4Fe-4S-S-AdoMet</note>
    </ligand>
</feature>
<feature type="binding site" evidence="1">
    <location>
        <begin position="162"/>
        <end position="163"/>
    </location>
    <ligand>
        <name>S-adenosyl-L-methionine</name>
        <dbReference type="ChEBI" id="CHEBI:59789"/>
    </ligand>
</feature>
<feature type="binding site" evidence="1">
    <location>
        <position position="194"/>
    </location>
    <ligand>
        <name>S-adenosyl-L-methionine</name>
        <dbReference type="ChEBI" id="CHEBI:59789"/>
    </ligand>
</feature>
<feature type="binding site" evidence="1">
    <location>
        <begin position="217"/>
        <end position="219"/>
    </location>
    <ligand>
        <name>S-adenosyl-L-methionine</name>
        <dbReference type="ChEBI" id="CHEBI:59789"/>
    </ligand>
</feature>
<feature type="binding site" evidence="1">
    <location>
        <position position="293"/>
    </location>
    <ligand>
        <name>S-adenosyl-L-methionine</name>
        <dbReference type="ChEBI" id="CHEBI:59789"/>
    </ligand>
</feature>
<feature type="disulfide bond" description="(transient)" evidence="1">
    <location>
        <begin position="112"/>
        <end position="336"/>
    </location>
</feature>
<gene>
    <name type="ordered locus">RPD_2859</name>
</gene>
<dbReference type="EC" id="2.1.1.-"/>
<dbReference type="EMBL" id="CP000283">
    <property type="protein sequence ID" value="ABE40087.1"/>
    <property type="molecule type" value="Genomic_DNA"/>
</dbReference>
<dbReference type="SMR" id="Q136A2"/>
<dbReference type="STRING" id="316057.RPD_2859"/>
<dbReference type="KEGG" id="rpd:RPD_2859"/>
<dbReference type="eggNOG" id="COG0820">
    <property type="taxonomic scope" value="Bacteria"/>
</dbReference>
<dbReference type="HOGENOM" id="CLU_029101_3_3_5"/>
<dbReference type="BioCyc" id="RPAL316057:RPD_RS14365-MONOMER"/>
<dbReference type="Proteomes" id="UP000001818">
    <property type="component" value="Chromosome"/>
</dbReference>
<dbReference type="GO" id="GO:0005737">
    <property type="term" value="C:cytoplasm"/>
    <property type="evidence" value="ECO:0007669"/>
    <property type="project" value="UniProtKB-SubCell"/>
</dbReference>
<dbReference type="GO" id="GO:0051539">
    <property type="term" value="F:4 iron, 4 sulfur cluster binding"/>
    <property type="evidence" value="ECO:0007669"/>
    <property type="project" value="UniProtKB-KW"/>
</dbReference>
<dbReference type="GO" id="GO:0046872">
    <property type="term" value="F:metal ion binding"/>
    <property type="evidence" value="ECO:0007669"/>
    <property type="project" value="UniProtKB-KW"/>
</dbReference>
<dbReference type="GO" id="GO:0008173">
    <property type="term" value="F:RNA methyltransferase activity"/>
    <property type="evidence" value="ECO:0007669"/>
    <property type="project" value="InterPro"/>
</dbReference>
<dbReference type="GO" id="GO:0070475">
    <property type="term" value="P:rRNA base methylation"/>
    <property type="evidence" value="ECO:0007669"/>
    <property type="project" value="TreeGrafter"/>
</dbReference>
<dbReference type="GO" id="GO:0030488">
    <property type="term" value="P:tRNA methylation"/>
    <property type="evidence" value="ECO:0007669"/>
    <property type="project" value="TreeGrafter"/>
</dbReference>
<dbReference type="CDD" id="cd01335">
    <property type="entry name" value="Radical_SAM"/>
    <property type="match status" value="1"/>
</dbReference>
<dbReference type="Gene3D" id="3.20.20.70">
    <property type="entry name" value="Aldolase class I"/>
    <property type="match status" value="1"/>
</dbReference>
<dbReference type="InterPro" id="IPR013785">
    <property type="entry name" value="Aldolase_TIM"/>
</dbReference>
<dbReference type="InterPro" id="IPR006638">
    <property type="entry name" value="Elp3/MiaA/NifB-like_rSAM"/>
</dbReference>
<dbReference type="InterPro" id="IPR040072">
    <property type="entry name" value="Methyltransferase_A"/>
</dbReference>
<dbReference type="InterPro" id="IPR004383">
    <property type="entry name" value="rRNA_lsu_MTrfase_RlmN/Cfr"/>
</dbReference>
<dbReference type="InterPro" id="IPR007197">
    <property type="entry name" value="rSAM"/>
</dbReference>
<dbReference type="PANTHER" id="PTHR30544">
    <property type="entry name" value="23S RRNA METHYLTRANSFERASE"/>
    <property type="match status" value="1"/>
</dbReference>
<dbReference type="PANTHER" id="PTHR30544:SF5">
    <property type="entry name" value="RADICAL SAM CORE DOMAIN-CONTAINING PROTEIN"/>
    <property type="match status" value="1"/>
</dbReference>
<dbReference type="Pfam" id="PF04055">
    <property type="entry name" value="Radical_SAM"/>
    <property type="match status" value="1"/>
</dbReference>
<dbReference type="SFLD" id="SFLDF00275">
    <property type="entry name" value="adenosine_C2_methyltransferase"/>
    <property type="match status" value="1"/>
</dbReference>
<dbReference type="SFLD" id="SFLDS00029">
    <property type="entry name" value="Radical_SAM"/>
    <property type="match status" value="1"/>
</dbReference>
<dbReference type="SMART" id="SM00729">
    <property type="entry name" value="Elp3"/>
    <property type="match status" value="1"/>
</dbReference>
<dbReference type="SUPFAM" id="SSF102114">
    <property type="entry name" value="Radical SAM enzymes"/>
    <property type="match status" value="1"/>
</dbReference>
<dbReference type="PROSITE" id="PS51918">
    <property type="entry name" value="RADICAL_SAM"/>
    <property type="match status" value="1"/>
</dbReference>
<sequence length="359" mass="39815">MASAQRHSTPDLVRQRDPAGVSGLSLGLTSSEFAGLHEGAVPDVTYRELFFPHADPPRRLQNWARSRGVRLRTLTRIGRDQGGRSEKMLFGLHDGYAVESVLIRRFDGHTACISSQVGCAFACRFCASGQAGLMRNLEAGEIVEQVVRLGPKVNRIVFMGIGEPLNNYQQVLKAIRILRDRQGMNFPTTGITLSTIGIPKALKQLREEHLAINLTISLHATTQEVRDRLIPGARKHPLGEVVERACAWARRHNRPVTFAYLVLPGINDSIADARRLAAMLRDSPARVNLMRWNPVDGVGLQRTPDRSLAHFRTTLENALVPVVVRDTQGRDISAACGQLWLRDLKGLPVGNRPRQGRMT</sequence>
<name>Y2859_RHOPS</name>
<organism>
    <name type="scientific">Rhodopseudomonas palustris (strain BisB5)</name>
    <dbReference type="NCBI Taxonomy" id="316057"/>
    <lineage>
        <taxon>Bacteria</taxon>
        <taxon>Pseudomonadati</taxon>
        <taxon>Pseudomonadota</taxon>
        <taxon>Alphaproteobacteria</taxon>
        <taxon>Hyphomicrobiales</taxon>
        <taxon>Nitrobacteraceae</taxon>
        <taxon>Rhodopseudomonas</taxon>
    </lineage>
</organism>
<proteinExistence type="inferred from homology"/>
<accession>Q136A2</accession>